<protein>
    <recommendedName>
        <fullName evidence="1">Large ribosomal subunit protein uL11</fullName>
    </recommendedName>
    <alternativeName>
        <fullName evidence="2">50S ribosomal protein L11</fullName>
    </alternativeName>
</protein>
<sequence>MAPKKKVSALLKLQIQAGKANPAPPLGPALGSHGVNIMDFCKQYNAATQDKMGQVIPVEITVYEDRSFTFILKTPPAAALLKKAAGIQKGTENPLTHKVGSVTKAQVREIAEIKMADLSARDVEAGMKIIAGTARSMGITVTD</sequence>
<dbReference type="EMBL" id="AP009256">
    <property type="protein sequence ID" value="BAF39028.1"/>
    <property type="molecule type" value="Genomic_DNA"/>
</dbReference>
<dbReference type="RefSeq" id="WP_003807772.1">
    <property type="nucleotide sequence ID" value="NZ_CAXVNC010000001.1"/>
</dbReference>
<dbReference type="SMR" id="A0ZZZ5"/>
<dbReference type="STRING" id="367928.BAD_0247"/>
<dbReference type="PaxDb" id="1680-BADO_0256"/>
<dbReference type="GeneID" id="4556678"/>
<dbReference type="KEGG" id="bad:BAD_0247"/>
<dbReference type="HOGENOM" id="CLU_074237_2_1_11"/>
<dbReference type="Proteomes" id="UP000008702">
    <property type="component" value="Chromosome"/>
</dbReference>
<dbReference type="GO" id="GO:0022625">
    <property type="term" value="C:cytosolic large ribosomal subunit"/>
    <property type="evidence" value="ECO:0007669"/>
    <property type="project" value="TreeGrafter"/>
</dbReference>
<dbReference type="GO" id="GO:0070180">
    <property type="term" value="F:large ribosomal subunit rRNA binding"/>
    <property type="evidence" value="ECO:0007669"/>
    <property type="project" value="UniProtKB-UniRule"/>
</dbReference>
<dbReference type="GO" id="GO:0003735">
    <property type="term" value="F:structural constituent of ribosome"/>
    <property type="evidence" value="ECO:0007669"/>
    <property type="project" value="InterPro"/>
</dbReference>
<dbReference type="GO" id="GO:0006412">
    <property type="term" value="P:translation"/>
    <property type="evidence" value="ECO:0007669"/>
    <property type="project" value="UniProtKB-UniRule"/>
</dbReference>
<dbReference type="CDD" id="cd00349">
    <property type="entry name" value="Ribosomal_L11"/>
    <property type="match status" value="1"/>
</dbReference>
<dbReference type="FunFam" id="1.10.10.250:FF:000001">
    <property type="entry name" value="50S ribosomal protein L11"/>
    <property type="match status" value="1"/>
</dbReference>
<dbReference type="FunFam" id="3.30.1550.10:FF:000001">
    <property type="entry name" value="50S ribosomal protein L11"/>
    <property type="match status" value="1"/>
</dbReference>
<dbReference type="Gene3D" id="1.10.10.250">
    <property type="entry name" value="Ribosomal protein L11, C-terminal domain"/>
    <property type="match status" value="1"/>
</dbReference>
<dbReference type="Gene3D" id="3.30.1550.10">
    <property type="entry name" value="Ribosomal protein L11/L12, N-terminal domain"/>
    <property type="match status" value="1"/>
</dbReference>
<dbReference type="HAMAP" id="MF_00736">
    <property type="entry name" value="Ribosomal_uL11"/>
    <property type="match status" value="1"/>
</dbReference>
<dbReference type="InterPro" id="IPR000911">
    <property type="entry name" value="Ribosomal_uL11"/>
</dbReference>
<dbReference type="InterPro" id="IPR006519">
    <property type="entry name" value="Ribosomal_uL11_bac-typ"/>
</dbReference>
<dbReference type="InterPro" id="IPR020783">
    <property type="entry name" value="Ribosomal_uL11_C"/>
</dbReference>
<dbReference type="InterPro" id="IPR036769">
    <property type="entry name" value="Ribosomal_uL11_C_sf"/>
</dbReference>
<dbReference type="InterPro" id="IPR020785">
    <property type="entry name" value="Ribosomal_uL11_CS"/>
</dbReference>
<dbReference type="InterPro" id="IPR020784">
    <property type="entry name" value="Ribosomal_uL11_N"/>
</dbReference>
<dbReference type="InterPro" id="IPR036796">
    <property type="entry name" value="Ribosomal_uL11_N_sf"/>
</dbReference>
<dbReference type="NCBIfam" id="TIGR01632">
    <property type="entry name" value="L11_bact"/>
    <property type="match status" value="1"/>
</dbReference>
<dbReference type="PANTHER" id="PTHR11661">
    <property type="entry name" value="60S RIBOSOMAL PROTEIN L12"/>
    <property type="match status" value="1"/>
</dbReference>
<dbReference type="PANTHER" id="PTHR11661:SF1">
    <property type="entry name" value="LARGE RIBOSOMAL SUBUNIT PROTEIN UL11M"/>
    <property type="match status" value="1"/>
</dbReference>
<dbReference type="Pfam" id="PF00298">
    <property type="entry name" value="Ribosomal_L11"/>
    <property type="match status" value="1"/>
</dbReference>
<dbReference type="Pfam" id="PF03946">
    <property type="entry name" value="Ribosomal_L11_N"/>
    <property type="match status" value="1"/>
</dbReference>
<dbReference type="SMART" id="SM00649">
    <property type="entry name" value="RL11"/>
    <property type="match status" value="1"/>
</dbReference>
<dbReference type="SUPFAM" id="SSF54747">
    <property type="entry name" value="Ribosomal L11/L12e N-terminal domain"/>
    <property type="match status" value="1"/>
</dbReference>
<dbReference type="SUPFAM" id="SSF46906">
    <property type="entry name" value="Ribosomal protein L11, C-terminal domain"/>
    <property type="match status" value="1"/>
</dbReference>
<dbReference type="PROSITE" id="PS00359">
    <property type="entry name" value="RIBOSOMAL_L11"/>
    <property type="match status" value="1"/>
</dbReference>
<name>RL11_BIFAA</name>
<reference key="1">
    <citation type="submission" date="2006-12" db="EMBL/GenBank/DDBJ databases">
        <title>Bifidobacterium adolescentis complete genome sequence.</title>
        <authorList>
            <person name="Suzuki T."/>
            <person name="Tsuda Y."/>
            <person name="Kanou N."/>
            <person name="Inoue T."/>
            <person name="Kumazaki K."/>
            <person name="Nagano S."/>
            <person name="Hirai S."/>
            <person name="Tanaka K."/>
            <person name="Watanabe K."/>
        </authorList>
    </citation>
    <scope>NUCLEOTIDE SEQUENCE [LARGE SCALE GENOMIC DNA]</scope>
    <source>
        <strain>ATCC 15703 / DSM 20083 / NCTC 11814 / E194a</strain>
    </source>
</reference>
<comment type="function">
    <text evidence="1">Forms part of the ribosomal stalk which helps the ribosome interact with GTP-bound translation factors.</text>
</comment>
<comment type="subunit">
    <text evidence="1">Part of the ribosomal stalk of the 50S ribosomal subunit. Interacts with L10 and the large rRNA to form the base of the stalk. L10 forms an elongated spine to which L12 dimers bind in a sequential fashion forming a multimeric L10(L12)X complex.</text>
</comment>
<comment type="PTM">
    <text evidence="1">One or more lysine residues are methylated.</text>
</comment>
<comment type="similarity">
    <text evidence="1">Belongs to the universal ribosomal protein uL11 family.</text>
</comment>
<evidence type="ECO:0000255" key="1">
    <source>
        <dbReference type="HAMAP-Rule" id="MF_00736"/>
    </source>
</evidence>
<evidence type="ECO:0000305" key="2"/>
<feature type="chain" id="PRO_1000046144" description="Large ribosomal subunit protein uL11">
    <location>
        <begin position="1"/>
        <end position="143"/>
    </location>
</feature>
<accession>A0ZZZ5</accession>
<organism>
    <name type="scientific">Bifidobacterium adolescentis (strain ATCC 15703 / DSM 20083 / NCTC 11814 / E194a)</name>
    <dbReference type="NCBI Taxonomy" id="367928"/>
    <lineage>
        <taxon>Bacteria</taxon>
        <taxon>Bacillati</taxon>
        <taxon>Actinomycetota</taxon>
        <taxon>Actinomycetes</taxon>
        <taxon>Bifidobacteriales</taxon>
        <taxon>Bifidobacteriaceae</taxon>
        <taxon>Bifidobacterium</taxon>
    </lineage>
</organism>
<proteinExistence type="inferred from homology"/>
<gene>
    <name evidence="1" type="primary">rplK</name>
    <name type="ordered locus">BAD_0247</name>
</gene>
<keyword id="KW-0488">Methylation</keyword>
<keyword id="KW-1185">Reference proteome</keyword>
<keyword id="KW-0687">Ribonucleoprotein</keyword>
<keyword id="KW-0689">Ribosomal protein</keyword>
<keyword id="KW-0694">RNA-binding</keyword>
<keyword id="KW-0699">rRNA-binding</keyword>